<feature type="chain" id="PRO_0000291925" description="Glutamate-rich protein 6">
    <location>
        <begin position="1"/>
        <end position="602"/>
    </location>
</feature>
<feature type="region of interest" description="Disordered" evidence="2">
    <location>
        <begin position="22"/>
        <end position="67"/>
    </location>
</feature>
<feature type="compositionally biased region" description="Low complexity" evidence="2">
    <location>
        <begin position="25"/>
        <end position="36"/>
    </location>
</feature>
<sequence length="602" mass="67964">MEDDIWKAVDLSGVFDEDSVELRPRLTSVSSPSLSSTPPPSPLSSPSWSEEELPAPRSDGSPASSISAHKSYPKIFQTFKKDLSEVTVDRLMYPSFYERVQISIQTEDQSWLQRISARKRIKRIPSIEITEAPQENLASKLRENWVINPEEPKLSILCEMEFNEDFVNFFETSLRTLPSIGPPTILSYRKEYSCMDVILKDEQELGATCEFCGSDLQSLFFNMDTSLDDAGTKGKSHRSCCLQFQNLLDYITEERLTTKSPEMELISISPHAAHGSDADRLKAKEKAMQRKQERQMARHFTIIPEQSPVGTEEDTKHLKTISYQLSGDYLQNVRTEEVDLQITNISITCCDSWKICGKVMGNELLEKDYKHGSKFLTSFPDGTIQIFYPSGNLAIIRVPNKTDGFICIIQEDTATSPAILALFDSSGRSSCYHPNGNVWVYINILGGQYSDQAGNRIRTWNWSSTKPTPAFVSFKPVLLALNRYIGIRILEQDKVSIHFLAMGQQATICLGTKVVLQDPEEVPTLRFLSGDDLLLLASLIKIRRLFSKMEGCVNFPVSKAWERLKQPSYLSSLSLKLLALCQNSGIQQNIMETITELIKENE</sequence>
<organism>
    <name type="scientific">Rattus norvegicus</name>
    <name type="common">Rat</name>
    <dbReference type="NCBI Taxonomy" id="10116"/>
    <lineage>
        <taxon>Eukaryota</taxon>
        <taxon>Metazoa</taxon>
        <taxon>Chordata</taxon>
        <taxon>Craniata</taxon>
        <taxon>Vertebrata</taxon>
        <taxon>Euteleostomi</taxon>
        <taxon>Mammalia</taxon>
        <taxon>Eutheria</taxon>
        <taxon>Euarchontoglires</taxon>
        <taxon>Glires</taxon>
        <taxon>Rodentia</taxon>
        <taxon>Myomorpha</taxon>
        <taxon>Muroidea</taxon>
        <taxon>Muridae</taxon>
        <taxon>Murinae</taxon>
        <taxon>Rattus</taxon>
    </lineage>
</organism>
<reference key="1">
    <citation type="journal article" date="2004" name="Genome Res.">
        <title>The status, quality, and expansion of the NIH full-length cDNA project: the Mammalian Gene Collection (MGC).</title>
        <authorList>
            <consortium name="The MGC Project Team"/>
        </authorList>
    </citation>
    <scope>NUCLEOTIDE SEQUENCE [LARGE SCALE MRNA]</scope>
    <source>
        <tissue>Testis</tissue>
    </source>
</reference>
<proteinExistence type="evidence at transcript level"/>
<keyword id="KW-0539">Nucleus</keyword>
<keyword id="KW-1185">Reference proteome</keyword>
<dbReference type="EMBL" id="BC083834">
    <property type="protein sequence ID" value="AAH83834.1"/>
    <property type="molecule type" value="mRNA"/>
</dbReference>
<dbReference type="RefSeq" id="NP_001019471.1">
    <property type="nucleotide sequence ID" value="NM_001024300.1"/>
</dbReference>
<dbReference type="FunCoup" id="Q5XI56">
    <property type="interactions" value="77"/>
</dbReference>
<dbReference type="IntAct" id="Q5XI56">
    <property type="interactions" value="1"/>
</dbReference>
<dbReference type="STRING" id="10116.ENSRNOP00000018294"/>
<dbReference type="GlyGen" id="Q5XI56">
    <property type="glycosylation" value="1 site"/>
</dbReference>
<dbReference type="PhosphoSitePlus" id="Q5XI56"/>
<dbReference type="PaxDb" id="10116-ENSRNOP00000018294"/>
<dbReference type="GeneID" id="499626"/>
<dbReference type="KEGG" id="rno:499626"/>
<dbReference type="UCSC" id="RGD:1559451">
    <property type="organism name" value="rat"/>
</dbReference>
<dbReference type="AGR" id="RGD:1559451"/>
<dbReference type="CTD" id="131831"/>
<dbReference type="RGD" id="1559451">
    <property type="gene designation" value="Erich6"/>
</dbReference>
<dbReference type="eggNOG" id="ENOG502QUAE">
    <property type="taxonomic scope" value="Eukaryota"/>
</dbReference>
<dbReference type="HOGENOM" id="CLU_030265_0_0_1"/>
<dbReference type="InParanoid" id="Q5XI56"/>
<dbReference type="OrthoDB" id="88231at9989"/>
<dbReference type="PhylomeDB" id="Q5XI56"/>
<dbReference type="TreeFam" id="TF333451"/>
<dbReference type="PRO" id="PR:Q5XI56"/>
<dbReference type="Proteomes" id="UP000002494">
    <property type="component" value="Unplaced"/>
</dbReference>
<dbReference type="GO" id="GO:0005634">
    <property type="term" value="C:nucleus"/>
    <property type="evidence" value="ECO:0000250"/>
    <property type="project" value="UniProtKB"/>
</dbReference>
<dbReference type="InterPro" id="IPR029281">
    <property type="entry name" value="FAM194_C"/>
</dbReference>
<dbReference type="PANTHER" id="PTHR23093:SF11">
    <property type="entry name" value="GLUTAMATE-RICH PROTEIN 6"/>
    <property type="match status" value="1"/>
</dbReference>
<dbReference type="PANTHER" id="PTHR23093">
    <property type="entry name" value="SIMILAR TO CHROMOSOME 3 OPEN READING FRAME 20"/>
    <property type="match status" value="1"/>
</dbReference>
<dbReference type="Pfam" id="PF14977">
    <property type="entry name" value="FAM194"/>
    <property type="match status" value="1"/>
</dbReference>
<evidence type="ECO:0000250" key="1">
    <source>
        <dbReference type="UniProtKB" id="Q7L0X2"/>
    </source>
</evidence>
<evidence type="ECO:0000256" key="2">
    <source>
        <dbReference type="SAM" id="MobiDB-lite"/>
    </source>
</evidence>
<evidence type="ECO:0000305" key="3"/>
<name>ERIP6_RAT</name>
<accession>Q5XI56</accession>
<protein>
    <recommendedName>
        <fullName>Glutamate-rich protein 6</fullName>
    </recommendedName>
    <alternativeName>
        <fullName>Protein FAM194A</fullName>
    </alternativeName>
</protein>
<comment type="subcellular location">
    <subcellularLocation>
        <location evidence="1">Nucleus</location>
    </subcellularLocation>
</comment>
<comment type="similarity">
    <text evidence="3">Belongs to the ERICH6 family.</text>
</comment>
<gene>
    <name type="primary">Erich6</name>
    <name type="synonym">Fam194a</name>
</gene>